<feature type="chain" id="PRO_0000207626" description="Autophagy-related protein 22">
    <location>
        <begin position="1"/>
        <end position="737"/>
    </location>
</feature>
<feature type="transmembrane region" description="Helical" evidence="2">
    <location>
        <begin position="166"/>
        <end position="186"/>
    </location>
</feature>
<feature type="transmembrane region" description="Helical" evidence="2">
    <location>
        <begin position="232"/>
        <end position="252"/>
    </location>
</feature>
<feature type="transmembrane region" description="Helical" evidence="2">
    <location>
        <begin position="264"/>
        <end position="284"/>
    </location>
</feature>
<feature type="transmembrane region" description="Helical" evidence="2">
    <location>
        <begin position="289"/>
        <end position="309"/>
    </location>
</feature>
<feature type="transmembrane region" description="Helical" evidence="2">
    <location>
        <begin position="395"/>
        <end position="415"/>
    </location>
</feature>
<feature type="transmembrane region" description="Helical" evidence="2">
    <location>
        <begin position="426"/>
        <end position="446"/>
    </location>
</feature>
<feature type="transmembrane region" description="Helical" evidence="2">
    <location>
        <begin position="487"/>
        <end position="507"/>
    </location>
</feature>
<feature type="transmembrane region" description="Helical" evidence="2">
    <location>
        <begin position="524"/>
        <end position="544"/>
    </location>
</feature>
<feature type="transmembrane region" description="Helical" evidence="2">
    <location>
        <begin position="559"/>
        <end position="579"/>
    </location>
</feature>
<feature type="transmembrane region" description="Helical" evidence="2">
    <location>
        <begin position="593"/>
        <end position="613"/>
    </location>
</feature>
<feature type="transmembrane region" description="Helical" evidence="2">
    <location>
        <begin position="632"/>
        <end position="652"/>
    </location>
</feature>
<feature type="transmembrane region" description="Helical" evidence="2">
    <location>
        <begin position="661"/>
        <end position="681"/>
    </location>
</feature>
<feature type="region of interest" description="Disordered" evidence="3">
    <location>
        <begin position="115"/>
        <end position="154"/>
    </location>
</feature>
<feature type="region of interest" description="Disordered" evidence="3">
    <location>
        <begin position="327"/>
        <end position="353"/>
    </location>
</feature>
<feature type="compositionally biased region" description="Low complexity" evidence="3">
    <location>
        <begin position="125"/>
        <end position="141"/>
    </location>
</feature>
<feature type="compositionally biased region" description="Acidic residues" evidence="3">
    <location>
        <begin position="338"/>
        <end position="349"/>
    </location>
</feature>
<feature type="glycosylation site" description="N-linked (GlcNAc...) asparagine" evidence="2">
    <location>
        <position position="354"/>
    </location>
</feature>
<feature type="glycosylation site" description="N-linked (GlcNAc...) asparagine" evidence="2">
    <location>
        <position position="419"/>
    </location>
</feature>
<gene>
    <name type="primary">apg-11</name>
    <name type="synonym">atg22</name>
    <name type="ORF">NCU07504</name>
</gene>
<accession>Q7SG38</accession>
<protein>
    <recommendedName>
        <fullName>Autophagy-related protein 22</fullName>
    </recommendedName>
</protein>
<dbReference type="EMBL" id="CM002236">
    <property type="protein sequence ID" value="EAA35815.3"/>
    <property type="molecule type" value="Genomic_DNA"/>
</dbReference>
<dbReference type="RefSeq" id="XP_965051.3">
    <property type="nucleotide sequence ID" value="XM_959958.3"/>
</dbReference>
<dbReference type="FunCoup" id="Q7SG38">
    <property type="interactions" value="20"/>
</dbReference>
<dbReference type="STRING" id="367110.Q7SG38"/>
<dbReference type="GlyCosmos" id="Q7SG38">
    <property type="glycosylation" value="2 sites, No reported glycans"/>
</dbReference>
<dbReference type="PaxDb" id="5141-EFNCRP00000007386"/>
<dbReference type="EnsemblFungi" id="EAA35815">
    <property type="protein sequence ID" value="EAA35815"/>
    <property type="gene ID" value="NCU07504"/>
</dbReference>
<dbReference type="GeneID" id="3881200"/>
<dbReference type="KEGG" id="ncr:NCU07504"/>
<dbReference type="VEuPathDB" id="FungiDB:NCU07504"/>
<dbReference type="HOGENOM" id="CLU_017518_1_1_1"/>
<dbReference type="InParanoid" id="Q7SG38"/>
<dbReference type="OrthoDB" id="192733at2759"/>
<dbReference type="Proteomes" id="UP000001805">
    <property type="component" value="Chromosome 1, Linkage Group I"/>
</dbReference>
<dbReference type="GO" id="GO:0005774">
    <property type="term" value="C:vacuolar membrane"/>
    <property type="evidence" value="ECO:0007669"/>
    <property type="project" value="UniProtKB-SubCell"/>
</dbReference>
<dbReference type="GO" id="GO:0032974">
    <property type="term" value="P:amino acid transmembrane export from vacuole"/>
    <property type="evidence" value="ECO:0000318"/>
    <property type="project" value="GO_Central"/>
</dbReference>
<dbReference type="GO" id="GO:0006914">
    <property type="term" value="P:autophagy"/>
    <property type="evidence" value="ECO:0007669"/>
    <property type="project" value="UniProtKB-KW"/>
</dbReference>
<dbReference type="CDD" id="cd17483">
    <property type="entry name" value="MFS_Atg22_like"/>
    <property type="match status" value="1"/>
</dbReference>
<dbReference type="Gene3D" id="1.20.1250.20">
    <property type="entry name" value="MFS general substrate transporter like domains"/>
    <property type="match status" value="1"/>
</dbReference>
<dbReference type="InterPro" id="IPR044738">
    <property type="entry name" value="Atg22"/>
</dbReference>
<dbReference type="InterPro" id="IPR024671">
    <property type="entry name" value="Atg22-like"/>
</dbReference>
<dbReference type="InterPro" id="IPR050495">
    <property type="entry name" value="ATG22/LtaA_families"/>
</dbReference>
<dbReference type="InterPro" id="IPR036259">
    <property type="entry name" value="MFS_trans_sf"/>
</dbReference>
<dbReference type="PANTHER" id="PTHR23519">
    <property type="entry name" value="AUTOPHAGY-RELATED PROTEIN 22"/>
    <property type="match status" value="1"/>
</dbReference>
<dbReference type="PANTHER" id="PTHR23519:SF1">
    <property type="entry name" value="AUTOPHAGY-RELATED PROTEIN 22"/>
    <property type="match status" value="1"/>
</dbReference>
<dbReference type="Pfam" id="PF11700">
    <property type="entry name" value="ATG22"/>
    <property type="match status" value="1"/>
</dbReference>
<dbReference type="SUPFAM" id="SSF103473">
    <property type="entry name" value="MFS general substrate transporter"/>
    <property type="match status" value="1"/>
</dbReference>
<comment type="function">
    <text evidence="1">Vacuolar effluxer which mediate the efflux of amino acids resulting from autophagic degradation. The release of autophagic amino acids allows the maintenance of protein synthesis and viability during nitrogen starvation (By similarity).</text>
</comment>
<comment type="subcellular location">
    <subcellularLocation>
        <location evidence="1">Vacuole membrane</location>
        <topology evidence="1">Multi-pass membrane protein</topology>
    </subcellularLocation>
    <text evidence="1">Vacuole and punctate structures.</text>
</comment>
<comment type="similarity">
    <text evidence="4">Belongs to the ATG22 family.</text>
</comment>
<proteinExistence type="inferred from homology"/>
<reference key="1">
    <citation type="journal article" date="2003" name="Nature">
        <title>The genome sequence of the filamentous fungus Neurospora crassa.</title>
        <authorList>
            <person name="Galagan J.E."/>
            <person name="Calvo S.E."/>
            <person name="Borkovich K.A."/>
            <person name="Selker E.U."/>
            <person name="Read N.D."/>
            <person name="Jaffe D.B."/>
            <person name="FitzHugh W."/>
            <person name="Ma L.-J."/>
            <person name="Smirnov S."/>
            <person name="Purcell S."/>
            <person name="Rehman B."/>
            <person name="Elkins T."/>
            <person name="Engels R."/>
            <person name="Wang S."/>
            <person name="Nielsen C.B."/>
            <person name="Butler J."/>
            <person name="Endrizzi M."/>
            <person name="Qui D."/>
            <person name="Ianakiev P."/>
            <person name="Bell-Pedersen D."/>
            <person name="Nelson M.A."/>
            <person name="Werner-Washburne M."/>
            <person name="Selitrennikoff C.P."/>
            <person name="Kinsey J.A."/>
            <person name="Braun E.L."/>
            <person name="Zelter A."/>
            <person name="Schulte U."/>
            <person name="Kothe G.O."/>
            <person name="Jedd G."/>
            <person name="Mewes H.-W."/>
            <person name="Staben C."/>
            <person name="Marcotte E."/>
            <person name="Greenberg D."/>
            <person name="Roy A."/>
            <person name="Foley K."/>
            <person name="Naylor J."/>
            <person name="Stange-Thomann N."/>
            <person name="Barrett R."/>
            <person name="Gnerre S."/>
            <person name="Kamal M."/>
            <person name="Kamvysselis M."/>
            <person name="Mauceli E.W."/>
            <person name="Bielke C."/>
            <person name="Rudd S."/>
            <person name="Frishman D."/>
            <person name="Krystofova S."/>
            <person name="Rasmussen C."/>
            <person name="Metzenberg R.L."/>
            <person name="Perkins D.D."/>
            <person name="Kroken S."/>
            <person name="Cogoni C."/>
            <person name="Macino G."/>
            <person name="Catcheside D.E.A."/>
            <person name="Li W."/>
            <person name="Pratt R.J."/>
            <person name="Osmani S.A."/>
            <person name="DeSouza C.P.C."/>
            <person name="Glass N.L."/>
            <person name="Orbach M.J."/>
            <person name="Berglund J.A."/>
            <person name="Voelker R."/>
            <person name="Yarden O."/>
            <person name="Plamann M."/>
            <person name="Seiler S."/>
            <person name="Dunlap J.C."/>
            <person name="Radford A."/>
            <person name="Aramayo R."/>
            <person name="Natvig D.O."/>
            <person name="Alex L.A."/>
            <person name="Mannhaupt G."/>
            <person name="Ebbole D.J."/>
            <person name="Freitag M."/>
            <person name="Paulsen I."/>
            <person name="Sachs M.S."/>
            <person name="Lander E.S."/>
            <person name="Nusbaum C."/>
            <person name="Birren B.W."/>
        </authorList>
    </citation>
    <scope>NUCLEOTIDE SEQUENCE [LARGE SCALE GENOMIC DNA]</scope>
    <source>
        <strain>ATCC 24698 / 74-OR23-1A / CBS 708.71 / DSM 1257 / FGSC 987</strain>
    </source>
</reference>
<keyword id="KW-0029">Amino-acid transport</keyword>
<keyword id="KW-0072">Autophagy</keyword>
<keyword id="KW-0325">Glycoprotein</keyword>
<keyword id="KW-0472">Membrane</keyword>
<keyword id="KW-1185">Reference proteome</keyword>
<keyword id="KW-0812">Transmembrane</keyword>
<keyword id="KW-1133">Transmembrane helix</keyword>
<keyword id="KW-0813">Transport</keyword>
<keyword id="KW-0926">Vacuole</keyword>
<organism>
    <name type="scientific">Neurospora crassa (strain ATCC 24698 / 74-OR23-1A / CBS 708.71 / DSM 1257 / FGSC 987)</name>
    <dbReference type="NCBI Taxonomy" id="367110"/>
    <lineage>
        <taxon>Eukaryota</taxon>
        <taxon>Fungi</taxon>
        <taxon>Dikarya</taxon>
        <taxon>Ascomycota</taxon>
        <taxon>Pezizomycotina</taxon>
        <taxon>Sordariomycetes</taxon>
        <taxon>Sordariomycetidae</taxon>
        <taxon>Sordariales</taxon>
        <taxon>Sordariaceae</taxon>
        <taxon>Neurospora</taxon>
    </lineage>
</organism>
<name>ATG22_NEUCR</name>
<evidence type="ECO:0000250" key="1"/>
<evidence type="ECO:0000255" key="2"/>
<evidence type="ECO:0000256" key="3">
    <source>
        <dbReference type="SAM" id="MobiDB-lite"/>
    </source>
</evidence>
<evidence type="ECO:0000305" key="4"/>
<sequence length="737" mass="80544">MAKISGLCVFKWYPLYAYQCPATGPSVQLKYSAMTPRHNNNVNHVYNGPDIQWEDESLRPPPAPRLFSRSSYASYASKASKRSFYSYTSSCFEADDERSDTLSFADWITTTMSGRMSPANAGDNSDSYPYGDDTDGDSSSGLPPPRYPGDDTRPTSQKELAGWYAYAFAAEVYVICGIGSFIPILLESLARENGVLLSDRSKPCGSSSDKHTTSAEGQCVVYVLGMEINTASFAMYTFSVSVLLQALLVVSISCAADHGNFRKKLLLAFAWIGSACVMAYIFISKSTYLIGALLAIISNTSFGASFVLLNSFLPLLVRHHPEIDQVGDYGSPGYATTEEGDDEDDEYQEDSTRNSTTALLGSRRYEEGEPLSRVQTTEELTSRELELSTQISAKGIGIGYIAGLFLQCVAIAILITLKNTTWSQRIVLCVIGAWWAIFTIPAAMWLRPRPGPPLPTKSNTGGIRALFHYTIYAWKSLFRTIHLARRLVDIVLFLAGWFLLSDAIATTSSTAILFAKTQLHMEPWALGMINVISTASGILGAFSWSFISRKFRLKAHQTILACIALFELIPLYGLMGYLPFVQAWGVGGLQQPWEMYPLAAIYGFVLGGLSGYCRSLYGELIPPGSEAAFYALYAITDKGSSVFGPAIVGAIIDASGEIRPAFWFLAAIVGTPALFIWFINVERGRTEGEALAEIIEGFKMNGQNGLNGNGADGLADDRRGSDASRAILGRYDDEDEE</sequence>